<reference evidence="4" key="1">
    <citation type="journal article" date="1998" name="Nature">
        <title>Deciphering the biology of Mycobacterium tuberculosis from the complete genome sequence.</title>
        <authorList>
            <person name="Cole S.T."/>
            <person name="Brosch R."/>
            <person name="Parkhill J."/>
            <person name="Garnier T."/>
            <person name="Churcher C.M."/>
            <person name="Harris D.E."/>
            <person name="Gordon S.V."/>
            <person name="Eiglmeier K."/>
            <person name="Gas S."/>
            <person name="Barry C.E. III"/>
            <person name="Tekaia F."/>
            <person name="Badcock K."/>
            <person name="Basham D."/>
            <person name="Brown D."/>
            <person name="Chillingworth T."/>
            <person name="Connor R."/>
            <person name="Davies R.M."/>
            <person name="Devlin K."/>
            <person name="Feltwell T."/>
            <person name="Gentles S."/>
            <person name="Hamlin N."/>
            <person name="Holroyd S."/>
            <person name="Hornsby T."/>
            <person name="Jagels K."/>
            <person name="Krogh A."/>
            <person name="McLean J."/>
            <person name="Moule S."/>
            <person name="Murphy L.D."/>
            <person name="Oliver S."/>
            <person name="Osborne J."/>
            <person name="Quail M.A."/>
            <person name="Rajandream M.A."/>
            <person name="Rogers J."/>
            <person name="Rutter S."/>
            <person name="Seeger K."/>
            <person name="Skelton S."/>
            <person name="Squares S."/>
            <person name="Squares R."/>
            <person name="Sulston J.E."/>
            <person name="Taylor K."/>
            <person name="Whitehead S."/>
            <person name="Barrell B.G."/>
        </authorList>
    </citation>
    <scope>NUCLEOTIDE SEQUENCE [LARGE SCALE GENOMIC DNA]</scope>
    <source>
        <strain>ATCC 25618 / H37Rv</strain>
    </source>
</reference>
<reference key="2">
    <citation type="journal article" date="2022" name="Genomics">
        <title>Deep N-terminomics of Mycobacterium tuberculosis H37Rv extensively correct annotated encoding genes.</title>
        <authorList>
            <person name="Shi J."/>
            <person name="Meng S."/>
            <person name="Wan L."/>
            <person name="Zhang Z."/>
            <person name="Jiang S."/>
            <person name="Zhu H."/>
            <person name="Dai E."/>
            <person name="Chang L."/>
            <person name="Gao H."/>
            <person name="Wan K."/>
            <person name="Zhang L."/>
            <person name="Zhao X."/>
            <person name="Liu H."/>
            <person name="Lyu Z."/>
            <person name="Zhang Y."/>
            <person name="Xu P."/>
        </authorList>
    </citation>
    <scope>PROTEIN SEQUENCE OF 1-8</scope>
    <scope>SEQUENCE REVISION TO N-TERMINUS</scope>
    <source>
        <strain>H37Rv</strain>
    </source>
</reference>
<reference evidence="5" key="3">
    <citation type="journal article" date="2011" name="Mol. Cell. Proteomics">
        <title>Proteogenomic analysis of Mycobacterium tuberculosis by high resolution mass spectrometry.</title>
        <authorList>
            <person name="Kelkar D.S."/>
            <person name="Kumar D."/>
            <person name="Kumar P."/>
            <person name="Balakrishnan L."/>
            <person name="Muthusamy B."/>
            <person name="Yadav A.K."/>
            <person name="Shrivastava P."/>
            <person name="Marimuthu A."/>
            <person name="Anand S."/>
            <person name="Sundaram H."/>
            <person name="Kingsbury R."/>
            <person name="Harsha H.C."/>
            <person name="Nair B."/>
            <person name="Prasad T.S."/>
            <person name="Chauhan D.S."/>
            <person name="Katoch K."/>
            <person name="Katoch V.M."/>
            <person name="Kumar P."/>
            <person name="Chaerkady R."/>
            <person name="Ramachandran S."/>
            <person name="Dash D."/>
            <person name="Pandey A."/>
        </authorList>
    </citation>
    <scope>IDENTIFICATION BY MASS SPECTROMETRY [LARGE SCALE ANALYSIS]</scope>
    <source>
        <strain>ATCC 25618 / H37Rv</strain>
    </source>
</reference>
<keyword id="KW-0903">Direct protein sequencing</keyword>
<keyword id="KW-0274">FAD</keyword>
<keyword id="KW-0285">Flavoprotein</keyword>
<keyword id="KW-0560">Oxidoreductase</keyword>
<keyword id="KW-1185">Reference proteome</keyword>
<evidence type="ECO:0000269" key="1">
    <source>
    </source>
</evidence>
<evidence type="ECO:0000303" key="2">
    <source>
    </source>
</evidence>
<evidence type="ECO:0000305" key="3"/>
<evidence type="ECO:0000312" key="4">
    <source>
        <dbReference type="EMBL" id="CCP42879.1"/>
    </source>
</evidence>
<evidence type="ECO:0007744" key="5">
    <source>
    </source>
</evidence>
<dbReference type="EC" id="1.3.99.-"/>
<dbReference type="EMBL" id="AL123456">
    <property type="protein sequence ID" value="CCP42879.1"/>
    <property type="status" value="ALT_INIT"/>
    <property type="molecule type" value="Genomic_DNA"/>
</dbReference>
<dbReference type="RefSeq" id="NP_214668.1">
    <property type="nucleotide sequence ID" value="NC_000962.3"/>
</dbReference>
<dbReference type="SMR" id="P96831"/>
<dbReference type="FunCoup" id="P96831">
    <property type="interactions" value="332"/>
</dbReference>
<dbReference type="STRING" id="83332.Rv0154c"/>
<dbReference type="PaxDb" id="83332-Rv0154c"/>
<dbReference type="DNASU" id="886836"/>
<dbReference type="GeneID" id="886836"/>
<dbReference type="KEGG" id="mtu:Rv0154c"/>
<dbReference type="PATRIC" id="fig|83332.111.peg.179"/>
<dbReference type="TubercuList" id="Rv0154c"/>
<dbReference type="eggNOG" id="COG1960">
    <property type="taxonomic scope" value="Bacteria"/>
</dbReference>
<dbReference type="InParanoid" id="P96831"/>
<dbReference type="OrthoDB" id="8876745at2"/>
<dbReference type="PhylomeDB" id="P96831"/>
<dbReference type="Proteomes" id="UP000001584">
    <property type="component" value="Chromosome"/>
</dbReference>
<dbReference type="GO" id="GO:0005737">
    <property type="term" value="C:cytoplasm"/>
    <property type="evidence" value="ECO:0000318"/>
    <property type="project" value="GO_Central"/>
</dbReference>
<dbReference type="GO" id="GO:0005886">
    <property type="term" value="C:plasma membrane"/>
    <property type="evidence" value="ECO:0007005"/>
    <property type="project" value="MTBBASE"/>
</dbReference>
<dbReference type="GO" id="GO:0003995">
    <property type="term" value="F:acyl-CoA dehydrogenase activity"/>
    <property type="evidence" value="ECO:0000318"/>
    <property type="project" value="GO_Central"/>
</dbReference>
<dbReference type="GO" id="GO:0050660">
    <property type="term" value="F:flavin adenine dinucleotide binding"/>
    <property type="evidence" value="ECO:0007669"/>
    <property type="project" value="InterPro"/>
</dbReference>
<dbReference type="GO" id="GO:0033539">
    <property type="term" value="P:fatty acid beta-oxidation using acyl-CoA dehydrogenase"/>
    <property type="evidence" value="ECO:0000318"/>
    <property type="project" value="GO_Central"/>
</dbReference>
<dbReference type="CDD" id="cd01155">
    <property type="entry name" value="ACAD_FadE2"/>
    <property type="match status" value="1"/>
</dbReference>
<dbReference type="FunFam" id="2.40.110.10:FF:000002">
    <property type="entry name" value="Acyl-CoA dehydrogenase fadE12"/>
    <property type="match status" value="1"/>
</dbReference>
<dbReference type="FunFam" id="1.10.540.10:FF:000045">
    <property type="entry name" value="Acyl-CoA dehydrogenase FadE2"/>
    <property type="match status" value="1"/>
</dbReference>
<dbReference type="FunFam" id="1.20.140.10:FF:000018">
    <property type="entry name" value="Acyl-CoA dehydrogenase family member 10"/>
    <property type="match status" value="1"/>
</dbReference>
<dbReference type="Gene3D" id="1.10.540.10">
    <property type="entry name" value="Acyl-CoA dehydrogenase/oxidase, N-terminal domain"/>
    <property type="match status" value="1"/>
</dbReference>
<dbReference type="Gene3D" id="2.40.110.10">
    <property type="entry name" value="Butyryl-CoA Dehydrogenase, subunit A, domain 2"/>
    <property type="match status" value="1"/>
</dbReference>
<dbReference type="Gene3D" id="1.20.140.10">
    <property type="entry name" value="Butyryl-CoA Dehydrogenase, subunit A, domain 3"/>
    <property type="match status" value="1"/>
</dbReference>
<dbReference type="InterPro" id="IPR050741">
    <property type="entry name" value="Acyl-CoA_dehydrogenase"/>
</dbReference>
<dbReference type="InterPro" id="IPR006091">
    <property type="entry name" value="Acyl-CoA_Oxase/DH_mid-dom"/>
</dbReference>
<dbReference type="InterPro" id="IPR046373">
    <property type="entry name" value="Acyl-CoA_Oxase/DH_mid-dom_sf"/>
</dbReference>
<dbReference type="InterPro" id="IPR036250">
    <property type="entry name" value="AcylCo_DH-like_C"/>
</dbReference>
<dbReference type="InterPro" id="IPR009075">
    <property type="entry name" value="AcylCo_DH/oxidase_C"/>
</dbReference>
<dbReference type="InterPro" id="IPR037069">
    <property type="entry name" value="AcylCoA_DH/ox_N_sf"/>
</dbReference>
<dbReference type="InterPro" id="IPR009100">
    <property type="entry name" value="AcylCoA_DH/oxidase_NM_dom_sf"/>
</dbReference>
<dbReference type="PANTHER" id="PTHR48083:SF13">
    <property type="entry name" value="ACYL-COA DEHYDROGENASE FAMILY MEMBER 11"/>
    <property type="match status" value="1"/>
</dbReference>
<dbReference type="PANTHER" id="PTHR48083">
    <property type="entry name" value="MEDIUM-CHAIN SPECIFIC ACYL-COA DEHYDROGENASE, MITOCHONDRIAL-RELATED"/>
    <property type="match status" value="1"/>
</dbReference>
<dbReference type="Pfam" id="PF00441">
    <property type="entry name" value="Acyl-CoA_dh_1"/>
    <property type="match status" value="1"/>
</dbReference>
<dbReference type="Pfam" id="PF02770">
    <property type="entry name" value="Acyl-CoA_dh_M"/>
    <property type="match status" value="1"/>
</dbReference>
<dbReference type="SUPFAM" id="SSF47203">
    <property type="entry name" value="Acyl-CoA dehydrogenase C-terminal domain-like"/>
    <property type="match status" value="1"/>
</dbReference>
<dbReference type="SUPFAM" id="SSF56645">
    <property type="entry name" value="Acyl-CoA dehydrogenase NM domain-like"/>
    <property type="match status" value="1"/>
</dbReference>
<feature type="chain" id="PRO_0000455761" description="Probable acyl-CoA dehydrogenase FadE2">
    <location>
        <begin position="1"/>
        <end position="407"/>
    </location>
</feature>
<name>ACD2_MYCTU</name>
<accession>P96831</accession>
<accession>F2GLV2</accession>
<accession>I6Y2X6</accession>
<accession>L0T2P6</accession>
<gene>
    <name evidence="4" type="primary">fadE2</name>
    <name evidence="4" type="ordered locus">Rv0154c</name>
</gene>
<organism>
    <name type="scientific">Mycobacterium tuberculosis (strain ATCC 25618 / H37Rv)</name>
    <dbReference type="NCBI Taxonomy" id="83332"/>
    <lineage>
        <taxon>Bacteria</taxon>
        <taxon>Bacillati</taxon>
        <taxon>Actinomycetota</taxon>
        <taxon>Actinomycetes</taxon>
        <taxon>Mycobacteriales</taxon>
        <taxon>Mycobacteriaceae</taxon>
        <taxon>Mycobacterium</taxon>
        <taxon>Mycobacterium tuberculosis complex</taxon>
    </lineage>
</organism>
<comment type="catalytic activity">
    <reaction evidence="3">
        <text>a 2,3-saturated acyl-CoA + A = a 2,3-dehydroacyl-CoA + AH2</text>
        <dbReference type="Rhea" id="RHEA:48608"/>
        <dbReference type="ChEBI" id="CHEBI:13193"/>
        <dbReference type="ChEBI" id="CHEBI:17499"/>
        <dbReference type="ChEBI" id="CHEBI:60015"/>
        <dbReference type="ChEBI" id="CHEBI:65111"/>
    </reaction>
</comment>
<comment type="cofactor">
    <cofactor evidence="3">
        <name>FAD</name>
        <dbReference type="ChEBI" id="CHEBI:57692"/>
    </cofactor>
</comment>
<comment type="similarity">
    <text evidence="3">Belongs to the acyl-CoA dehydrogenase family.</text>
</comment>
<comment type="sequence caution" evidence="1">
    <conflict type="erroneous initiation">
        <sequence resource="EMBL-CDS" id="CCP42879"/>
    </conflict>
    <text>Truncated N-terminus.</text>
</comment>
<sequence length="407" mass="44808">MDFAMSAKAIDYRTRLSDFMTEHVFGAEADYDDYRRAAGPADHTAPPIIEELKTKAKDRGLWNLFLSAESGLTNLEYAPLAEMTGWSMEIAPEALNCAAPDTGNMEILHMFGTEQQRAQWLRPLLDGKIRSAFSMTEPAVASSDARNIETTISRDGADYVINGRKWWTSGAADPRCKILIVMGRTNPDAAAHQQQSMVLVPIDTPGVTIVRSTPVFGWQDRHGHCEIDYHNVRVPATNLLGEEGSGFAIAQARLGPGRIHHCMRALGAAERALALMVNRVRNRVAFGRPLAEQGVVQQAIAQSRNEIDQARLLCEKAAWTIDQHGNKEARHLVAMIKAVAPRVACDVIDRAIQVHGAAGVSDDTPLARLYGWHRAMRIFDGPDEVHLRSIARAELSREKSTFAAAVT</sequence>
<protein>
    <recommendedName>
        <fullName evidence="2">Probable acyl-CoA dehydrogenase FadE2</fullName>
        <ecNumber>1.3.99.-</ecNumber>
    </recommendedName>
</protein>
<proteinExistence type="evidence at protein level"/>